<name>NDBS_LYCMC</name>
<protein>
    <recommendedName>
        <fullName evidence="4">Bradykinin-potentiating peptide 25.12</fullName>
        <shortName evidence="4">BPP-25.12</shortName>
    </recommendedName>
</protein>
<feature type="signal peptide" evidence="2">
    <location>
        <begin position="1"/>
        <end position="22"/>
    </location>
</feature>
<feature type="chain" id="PRO_0000403872" description="Bradykinin-potentiating peptide 25.12">
    <location>
        <begin position="23"/>
        <end position="81"/>
    </location>
</feature>
<feature type="region of interest" description="Disordered" evidence="3">
    <location>
        <begin position="67"/>
        <end position="86"/>
    </location>
</feature>
<keyword id="KW-0165">Cleavage on pair of basic residues</keyword>
<keyword id="KW-0382">Hypotensive agent</keyword>
<keyword id="KW-0481">Metalloenzyme inhibitor</keyword>
<keyword id="KW-0483">Metalloprotease inhibitor</keyword>
<keyword id="KW-0646">Protease inhibitor</keyword>
<keyword id="KW-0964">Secreted</keyword>
<keyword id="KW-0732">Signal</keyword>
<keyword id="KW-0800">Toxin</keyword>
<reference key="1">
    <citation type="journal article" date="2010" name="BMC Genomics">
        <title>Comparative venom gland transcriptome analysis of the scorpion Lychas mucronatus reveals intraspecific toxic gene diversity and new venomous components.</title>
        <authorList>
            <person name="Zhao R."/>
            <person name="Ma Y."/>
            <person name="He Y."/>
            <person name="Di Z."/>
            <person name="Wu Y.-L."/>
            <person name="Cao Z.-J."/>
            <person name="Li W.-X."/>
        </authorList>
    </citation>
    <scope>NUCLEOTIDE SEQUENCE [MRNA]</scope>
    <source>
        <strain>Yunnan</strain>
        <tissue>Venom gland</tissue>
    </source>
</reference>
<evidence type="ECO:0000250" key="1"/>
<evidence type="ECO:0000255" key="2"/>
<evidence type="ECO:0000256" key="3">
    <source>
        <dbReference type="SAM" id="MobiDB-lite"/>
    </source>
</evidence>
<evidence type="ECO:0000303" key="4">
    <source>
    </source>
</evidence>
<evidence type="ECO:0000305" key="5"/>
<organism>
    <name type="scientific">Lychas mucronatus</name>
    <name type="common">Chinese swimming scorpion</name>
    <dbReference type="NCBI Taxonomy" id="172552"/>
    <lineage>
        <taxon>Eukaryota</taxon>
        <taxon>Metazoa</taxon>
        <taxon>Ecdysozoa</taxon>
        <taxon>Arthropoda</taxon>
        <taxon>Chelicerata</taxon>
        <taxon>Arachnida</taxon>
        <taxon>Scorpiones</taxon>
        <taxon>Buthida</taxon>
        <taxon>Buthoidea</taxon>
        <taxon>Buthidae</taxon>
        <taxon>Lychas</taxon>
    </lineage>
</organism>
<proteinExistence type="inferred from homology"/>
<dbReference type="EMBL" id="GT028786">
    <property type="status" value="NOT_ANNOTATED_CDS"/>
    <property type="molecule type" value="mRNA"/>
</dbReference>
<dbReference type="SMR" id="P0CI93"/>
<dbReference type="GO" id="GO:0005576">
    <property type="term" value="C:extracellular region"/>
    <property type="evidence" value="ECO:0007669"/>
    <property type="project" value="UniProtKB-SubCell"/>
</dbReference>
<dbReference type="GO" id="GO:0030414">
    <property type="term" value="F:peptidase inhibitor activity"/>
    <property type="evidence" value="ECO:0007669"/>
    <property type="project" value="UniProtKB-KW"/>
</dbReference>
<dbReference type="GO" id="GO:0090729">
    <property type="term" value="F:toxin activity"/>
    <property type="evidence" value="ECO:0007669"/>
    <property type="project" value="UniProtKB-KW"/>
</dbReference>
<dbReference type="GO" id="GO:0008217">
    <property type="term" value="P:regulation of blood pressure"/>
    <property type="evidence" value="ECO:0007669"/>
    <property type="project" value="UniProtKB-KW"/>
</dbReference>
<sequence length="86" mass="9885">MNKRVLLVIFFVTLLIADEVNSFSFFRKAKGFLKKIWKSKIARRLREKGMKALKNYANDVINGPAEAPAAAAAPEEPPVEQRRRRR</sequence>
<comment type="function">
    <text evidence="1">Inhibits angiotensin-converting enzyme (ACE), but does not serve as substrate for the enzyme. Potentiates bradykinin (BK) on the isolated guinea pig ileum as well as the isolated rat uterus for contraction. Also potentiates in vivo the depressor effect of BK on arterial blood pressure in the normotensive anesthetized rat.</text>
</comment>
<comment type="subcellular location">
    <subcellularLocation>
        <location evidence="1">Secreted</location>
    </subcellularLocation>
</comment>
<comment type="tissue specificity">
    <text evidence="5">Expressed by the venom gland.</text>
</comment>
<comment type="similarity">
    <text evidence="5">Belongs to the non-disulfide-bridged peptide (NDBP) superfamily. Long chain multifunctional peptide (group 2) family.</text>
</comment>
<accession>P0CI93</accession>